<evidence type="ECO:0000255" key="1">
    <source>
        <dbReference type="HAMAP-Rule" id="MF_03011"/>
    </source>
</evidence>
<evidence type="ECO:0000255" key="2">
    <source>
        <dbReference type="PROSITE-ProRule" id="PRU01185"/>
    </source>
</evidence>
<reference key="1">
    <citation type="submission" date="2005-09" db="EMBL/GenBank/DDBJ databases">
        <title>Annotation of the Aspergillus terreus NIH2624 genome.</title>
        <authorList>
            <person name="Birren B.W."/>
            <person name="Lander E.S."/>
            <person name="Galagan J.E."/>
            <person name="Nusbaum C."/>
            <person name="Devon K."/>
            <person name="Henn M."/>
            <person name="Ma L.-J."/>
            <person name="Jaffe D.B."/>
            <person name="Butler J."/>
            <person name="Alvarez P."/>
            <person name="Gnerre S."/>
            <person name="Grabherr M."/>
            <person name="Kleber M."/>
            <person name="Mauceli E.W."/>
            <person name="Brockman W."/>
            <person name="Rounsley S."/>
            <person name="Young S.K."/>
            <person name="LaButti K."/>
            <person name="Pushparaj V."/>
            <person name="DeCaprio D."/>
            <person name="Crawford M."/>
            <person name="Koehrsen M."/>
            <person name="Engels R."/>
            <person name="Montgomery P."/>
            <person name="Pearson M."/>
            <person name="Howarth C."/>
            <person name="Larson L."/>
            <person name="Luoma S."/>
            <person name="White J."/>
            <person name="Alvarado L."/>
            <person name="Kodira C.D."/>
            <person name="Zeng Q."/>
            <person name="Oleary S."/>
            <person name="Yandava C."/>
            <person name="Denning D.W."/>
            <person name="Nierman W.C."/>
            <person name="Milne T."/>
            <person name="Madden K."/>
        </authorList>
    </citation>
    <scope>NUCLEOTIDE SEQUENCE [LARGE SCALE GENOMIC DNA]</scope>
    <source>
        <strain>NIH 2624 / FGSC A1156</strain>
    </source>
</reference>
<accession>Q0CPA8</accession>
<organism>
    <name type="scientific">Aspergillus terreus (strain NIH 2624 / FGSC A1156)</name>
    <dbReference type="NCBI Taxonomy" id="341663"/>
    <lineage>
        <taxon>Eukaryota</taxon>
        <taxon>Fungi</taxon>
        <taxon>Dikarya</taxon>
        <taxon>Ascomycota</taxon>
        <taxon>Pezizomycotina</taxon>
        <taxon>Eurotiomycetes</taxon>
        <taxon>Eurotiomycetidae</taxon>
        <taxon>Eurotiales</taxon>
        <taxon>Aspergillaceae</taxon>
        <taxon>Aspergillus</taxon>
        <taxon>Aspergillus subgen. Circumdati</taxon>
    </lineage>
</organism>
<proteinExistence type="inferred from homology"/>
<comment type="function">
    <text evidence="1">Component of the eukaryotic translation initiation factor 3 (eIF-3) complex, which is involved in protein synthesis of a specialized repertoire of mRNAs and, together with other initiation factors, stimulates binding of mRNA and methionyl-tRNAi to the 40S ribosome. The eIF-3 complex specifically targets and initiates translation of a subset of mRNAs involved in cell proliferation.</text>
</comment>
<comment type="subunit">
    <text evidence="1">Component of the eukaryotic translation initiation factor 3 (eIF-3) complex.</text>
</comment>
<comment type="subcellular location">
    <subcellularLocation>
        <location evidence="1">Cytoplasm</location>
    </subcellularLocation>
</comment>
<comment type="similarity">
    <text evidence="1">Belongs to the eIF-3 subunit L family.</text>
</comment>
<name>EIF3L_ASPTN</name>
<keyword id="KW-0963">Cytoplasm</keyword>
<keyword id="KW-0396">Initiation factor</keyword>
<keyword id="KW-0648">Protein biosynthesis</keyword>
<keyword id="KW-1185">Reference proteome</keyword>
<sequence>MSYEERANAHPNLNDESDVEEEALVNDYREQVNFDDGMSELDRTTSLGAASQTQDLQAQLAAAATPLEYQATLETKFASYDNYCSLFHYILNSDGPVELEVPSYYWAWDVIDEFIYQFESFCRYRNRVARSGSNEEEAQLLRENPNTWGCYSVLNVLYSLIQRSQINEQLAAMKRGEDPLAFAGEYGSRPLYKMLGYFSIIGLLRVHCLLGDFSLALKTLDDIEMNKKAMFARVMAAHFTTYYYVGFSYMMMRRYGDAIRMFSHILVYVSRTKNFQKGGNSYDAIAKKNDQMYALIAICVALHPTRLDDTIHSALREKYGEQLNRLQHGGPEALPLFEELFRSACPKFISPTPPDFDNPSVNIDPVDHHTAIFMDEVKNTLYNPTIRSYLKLYTTMDLKKLAGFLEVEPEKLRSWLLVNKQRSRQVRWVEGGLLEGEPVNANDLDYALEKDLIHVSETKAGRRLVDWYLRNLARVY</sequence>
<protein>
    <recommendedName>
        <fullName evidence="1">Eukaryotic translation initiation factor 3 subunit L</fullName>
        <shortName evidence="1">eIF3l</shortName>
    </recommendedName>
</protein>
<feature type="chain" id="PRO_0000364260" description="Eukaryotic translation initiation factor 3 subunit L">
    <location>
        <begin position="1"/>
        <end position="476"/>
    </location>
</feature>
<feature type="domain" description="PCI" evidence="2">
    <location>
        <begin position="257"/>
        <end position="452"/>
    </location>
</feature>
<dbReference type="EMBL" id="CH476599">
    <property type="protein sequence ID" value="EAU34923.1"/>
    <property type="molecule type" value="Genomic_DNA"/>
</dbReference>
<dbReference type="RefSeq" id="XP_001213654.1">
    <property type="nucleotide sequence ID" value="XM_001213654.1"/>
</dbReference>
<dbReference type="SMR" id="Q0CPA8"/>
<dbReference type="STRING" id="341663.Q0CPA8"/>
<dbReference type="EnsemblFungi" id="EAU34923">
    <property type="protein sequence ID" value="EAU34923"/>
    <property type="gene ID" value="ATEG_04476"/>
</dbReference>
<dbReference type="GeneID" id="4320434"/>
<dbReference type="VEuPathDB" id="FungiDB:ATEG_04476"/>
<dbReference type="eggNOG" id="KOG3677">
    <property type="taxonomic scope" value="Eukaryota"/>
</dbReference>
<dbReference type="HOGENOM" id="CLU_029210_2_0_1"/>
<dbReference type="OMA" id="AGWFIRN"/>
<dbReference type="OrthoDB" id="15082at2759"/>
<dbReference type="Proteomes" id="UP000007963">
    <property type="component" value="Unassembled WGS sequence"/>
</dbReference>
<dbReference type="GO" id="GO:0016282">
    <property type="term" value="C:eukaryotic 43S preinitiation complex"/>
    <property type="evidence" value="ECO:0007669"/>
    <property type="project" value="UniProtKB-UniRule"/>
</dbReference>
<dbReference type="GO" id="GO:0033290">
    <property type="term" value="C:eukaryotic 48S preinitiation complex"/>
    <property type="evidence" value="ECO:0007669"/>
    <property type="project" value="UniProtKB-UniRule"/>
</dbReference>
<dbReference type="GO" id="GO:0005852">
    <property type="term" value="C:eukaryotic translation initiation factor 3 complex"/>
    <property type="evidence" value="ECO:0007669"/>
    <property type="project" value="UniProtKB-UniRule"/>
</dbReference>
<dbReference type="GO" id="GO:0003743">
    <property type="term" value="F:translation initiation factor activity"/>
    <property type="evidence" value="ECO:0007669"/>
    <property type="project" value="UniProtKB-UniRule"/>
</dbReference>
<dbReference type="GO" id="GO:0001732">
    <property type="term" value="P:formation of cytoplasmic translation initiation complex"/>
    <property type="evidence" value="ECO:0007669"/>
    <property type="project" value="UniProtKB-UniRule"/>
</dbReference>
<dbReference type="HAMAP" id="MF_03011">
    <property type="entry name" value="eIF3l"/>
    <property type="match status" value="1"/>
</dbReference>
<dbReference type="InterPro" id="IPR019382">
    <property type="entry name" value="eIF3l"/>
</dbReference>
<dbReference type="InterPro" id="IPR000717">
    <property type="entry name" value="PCI_dom"/>
</dbReference>
<dbReference type="PANTHER" id="PTHR13242">
    <property type="entry name" value="EUKARYOTIC TRANSLATION INITIATION FACTOR 3"/>
    <property type="match status" value="1"/>
</dbReference>
<dbReference type="PANTHER" id="PTHR13242:SF0">
    <property type="entry name" value="EUKARYOTIC TRANSLATION INITIATION FACTOR 3 SUBUNIT L"/>
    <property type="match status" value="1"/>
</dbReference>
<dbReference type="Pfam" id="PF10255">
    <property type="entry name" value="Paf67"/>
    <property type="match status" value="1"/>
</dbReference>
<dbReference type="PROSITE" id="PS50250">
    <property type="entry name" value="PCI"/>
    <property type="match status" value="1"/>
</dbReference>
<gene>
    <name type="ORF">ATEG_04476</name>
</gene>